<sequence length="292" mass="31668">MPSLKDLRNRIASVKATQKITKAMQMVAAAKLRRAQEAAEAARPYSQRMGAVLANIAQNVTGEDAPALMAGTGKDDVHLLVVCTAERGLCGGFNSQIARLARDHARKLLAEGKTVKIITVGKKGADILRREFASLIIDHVNLREVKQLAFVHADQIGHKVIELFEQGEFDVCTLFYSEFKSVIAQIPTAQQIIPASAGDVAQAETAGDAIYEYEPDPAAILSTLIPRNISVQIFRALLENVAGEMGAKMSAMDNATRNAGDMINKLSITYNRQRQAQITKELIEIISGAEAL</sequence>
<keyword id="KW-0066">ATP synthesis</keyword>
<keyword id="KW-0997">Cell inner membrane</keyword>
<keyword id="KW-1003">Cell membrane</keyword>
<keyword id="KW-0139">CF(1)</keyword>
<keyword id="KW-0375">Hydrogen ion transport</keyword>
<keyword id="KW-0406">Ion transport</keyword>
<keyword id="KW-0472">Membrane</keyword>
<keyword id="KW-1185">Reference proteome</keyword>
<keyword id="KW-0813">Transport</keyword>
<reference key="1">
    <citation type="journal article" date="2011" name="J. Bacteriol.">
        <title>Genome of Ochrobactrum anthropi ATCC 49188 T, a versatile opportunistic pathogen and symbiont of several eukaryotic hosts.</title>
        <authorList>
            <person name="Chain P.S."/>
            <person name="Lang D.M."/>
            <person name="Comerci D.J."/>
            <person name="Malfatti S.A."/>
            <person name="Vergez L.M."/>
            <person name="Shin M."/>
            <person name="Ugalde R.A."/>
            <person name="Garcia E."/>
            <person name="Tolmasky M.E."/>
        </authorList>
    </citation>
    <scope>NUCLEOTIDE SEQUENCE [LARGE SCALE GENOMIC DNA]</scope>
    <source>
        <strain>ATCC 49188 / DSM 6882 / CCUG 24695 / JCM 21032 / LMG 3331 / NBRC 15819 / NCTC 12168 / Alc 37</strain>
    </source>
</reference>
<feature type="chain" id="PRO_1000053274" description="ATP synthase gamma chain">
    <location>
        <begin position="1"/>
        <end position="292"/>
    </location>
</feature>
<proteinExistence type="inferred from homology"/>
<organism>
    <name type="scientific">Brucella anthropi (strain ATCC 49188 / DSM 6882 / CCUG 24695 / JCM 21032 / LMG 3331 / NBRC 15819 / NCTC 12168 / Alc 37)</name>
    <name type="common">Ochrobactrum anthropi</name>
    <dbReference type="NCBI Taxonomy" id="439375"/>
    <lineage>
        <taxon>Bacteria</taxon>
        <taxon>Pseudomonadati</taxon>
        <taxon>Pseudomonadota</taxon>
        <taxon>Alphaproteobacteria</taxon>
        <taxon>Hyphomicrobiales</taxon>
        <taxon>Brucellaceae</taxon>
        <taxon>Brucella/Ochrobactrum group</taxon>
        <taxon>Brucella</taxon>
    </lineage>
</organism>
<name>ATPG_BRUA4</name>
<gene>
    <name evidence="1" type="primary">atpG</name>
    <name type="ordered locus">Oant_1104</name>
</gene>
<evidence type="ECO:0000255" key="1">
    <source>
        <dbReference type="HAMAP-Rule" id="MF_00815"/>
    </source>
</evidence>
<dbReference type="EMBL" id="CP000758">
    <property type="protein sequence ID" value="ABS13824.1"/>
    <property type="molecule type" value="Genomic_DNA"/>
</dbReference>
<dbReference type="RefSeq" id="WP_012091260.1">
    <property type="nucleotide sequence ID" value="NC_009667.1"/>
</dbReference>
<dbReference type="SMR" id="A6WXX0"/>
<dbReference type="STRING" id="439375.Oant_1104"/>
<dbReference type="KEGG" id="oan:Oant_1104"/>
<dbReference type="PATRIC" id="fig|439375.7.peg.1154"/>
<dbReference type="eggNOG" id="COG0224">
    <property type="taxonomic scope" value="Bacteria"/>
</dbReference>
<dbReference type="HOGENOM" id="CLU_050669_0_1_5"/>
<dbReference type="PhylomeDB" id="A6WXX0"/>
<dbReference type="Proteomes" id="UP000002301">
    <property type="component" value="Chromosome 1"/>
</dbReference>
<dbReference type="GO" id="GO:0005886">
    <property type="term" value="C:plasma membrane"/>
    <property type="evidence" value="ECO:0007669"/>
    <property type="project" value="UniProtKB-SubCell"/>
</dbReference>
<dbReference type="GO" id="GO:0045259">
    <property type="term" value="C:proton-transporting ATP synthase complex"/>
    <property type="evidence" value="ECO:0007669"/>
    <property type="project" value="UniProtKB-KW"/>
</dbReference>
<dbReference type="GO" id="GO:0005524">
    <property type="term" value="F:ATP binding"/>
    <property type="evidence" value="ECO:0007669"/>
    <property type="project" value="UniProtKB-UniRule"/>
</dbReference>
<dbReference type="GO" id="GO:0046933">
    <property type="term" value="F:proton-transporting ATP synthase activity, rotational mechanism"/>
    <property type="evidence" value="ECO:0007669"/>
    <property type="project" value="UniProtKB-UniRule"/>
</dbReference>
<dbReference type="GO" id="GO:0042777">
    <property type="term" value="P:proton motive force-driven plasma membrane ATP synthesis"/>
    <property type="evidence" value="ECO:0007669"/>
    <property type="project" value="UniProtKB-UniRule"/>
</dbReference>
<dbReference type="CDD" id="cd12151">
    <property type="entry name" value="F1-ATPase_gamma"/>
    <property type="match status" value="1"/>
</dbReference>
<dbReference type="FunFam" id="1.10.287.80:FF:000001">
    <property type="entry name" value="ATP synthase gamma chain"/>
    <property type="match status" value="1"/>
</dbReference>
<dbReference type="FunFam" id="1.10.287.80:FF:000003">
    <property type="entry name" value="ATP synthase gamma chain, chloroplastic"/>
    <property type="match status" value="1"/>
</dbReference>
<dbReference type="Gene3D" id="3.40.1380.10">
    <property type="match status" value="1"/>
</dbReference>
<dbReference type="Gene3D" id="1.10.287.80">
    <property type="entry name" value="ATP synthase, gamma subunit, helix hairpin domain"/>
    <property type="match status" value="1"/>
</dbReference>
<dbReference type="HAMAP" id="MF_00815">
    <property type="entry name" value="ATP_synth_gamma_bact"/>
    <property type="match status" value="1"/>
</dbReference>
<dbReference type="InterPro" id="IPR035968">
    <property type="entry name" value="ATP_synth_F1_ATPase_gsu"/>
</dbReference>
<dbReference type="InterPro" id="IPR000131">
    <property type="entry name" value="ATP_synth_F1_gsu"/>
</dbReference>
<dbReference type="InterPro" id="IPR023632">
    <property type="entry name" value="ATP_synth_F1_gsu_CS"/>
</dbReference>
<dbReference type="NCBIfam" id="TIGR01146">
    <property type="entry name" value="ATPsyn_F1gamma"/>
    <property type="match status" value="1"/>
</dbReference>
<dbReference type="NCBIfam" id="NF004146">
    <property type="entry name" value="PRK05621.1-4"/>
    <property type="match status" value="1"/>
</dbReference>
<dbReference type="PANTHER" id="PTHR11693">
    <property type="entry name" value="ATP SYNTHASE GAMMA CHAIN"/>
    <property type="match status" value="1"/>
</dbReference>
<dbReference type="PANTHER" id="PTHR11693:SF22">
    <property type="entry name" value="ATP SYNTHASE SUBUNIT GAMMA, MITOCHONDRIAL"/>
    <property type="match status" value="1"/>
</dbReference>
<dbReference type="Pfam" id="PF00231">
    <property type="entry name" value="ATP-synt"/>
    <property type="match status" value="1"/>
</dbReference>
<dbReference type="PIRSF" id="PIRSF039089">
    <property type="entry name" value="ATP_synthase_gamma"/>
    <property type="match status" value="1"/>
</dbReference>
<dbReference type="PRINTS" id="PR00126">
    <property type="entry name" value="ATPASEGAMMA"/>
</dbReference>
<dbReference type="SUPFAM" id="SSF52943">
    <property type="entry name" value="ATP synthase (F1-ATPase), gamma subunit"/>
    <property type="match status" value="1"/>
</dbReference>
<dbReference type="PROSITE" id="PS00153">
    <property type="entry name" value="ATPASE_GAMMA"/>
    <property type="match status" value="1"/>
</dbReference>
<protein>
    <recommendedName>
        <fullName evidence="1">ATP synthase gamma chain</fullName>
    </recommendedName>
    <alternativeName>
        <fullName evidence="1">ATP synthase F1 sector gamma subunit</fullName>
    </alternativeName>
    <alternativeName>
        <fullName evidence="1">F-ATPase gamma subunit</fullName>
    </alternativeName>
</protein>
<comment type="function">
    <text evidence="1">Produces ATP from ADP in the presence of a proton gradient across the membrane. The gamma chain is believed to be important in regulating ATPase activity and the flow of protons through the CF(0) complex.</text>
</comment>
<comment type="subunit">
    <text evidence="1">F-type ATPases have 2 components, CF(1) - the catalytic core - and CF(0) - the membrane proton channel. CF(1) has five subunits: alpha(3), beta(3), gamma(1), delta(1), epsilon(1). CF(0) has three main subunits: a, b and c.</text>
</comment>
<comment type="subcellular location">
    <subcellularLocation>
        <location evidence="1">Cell inner membrane</location>
        <topology evidence="1">Peripheral membrane protein</topology>
    </subcellularLocation>
</comment>
<comment type="similarity">
    <text evidence="1">Belongs to the ATPase gamma chain family.</text>
</comment>
<accession>A6WXX0</accession>